<dbReference type="EMBL" id="CP001233">
    <property type="protein sequence ID" value="ACP05481.1"/>
    <property type="status" value="ALT_INIT"/>
    <property type="molecule type" value="Genomic_DNA"/>
</dbReference>
<dbReference type="SMR" id="C3LLQ5"/>
<dbReference type="KEGG" id="vcm:VCM66_1164"/>
<dbReference type="HOGENOM" id="CLU_074944_2_0_6"/>
<dbReference type="Proteomes" id="UP000001217">
    <property type="component" value="Chromosome I"/>
</dbReference>
<dbReference type="GO" id="GO:0005737">
    <property type="term" value="C:cytoplasm"/>
    <property type="evidence" value="ECO:0007669"/>
    <property type="project" value="InterPro"/>
</dbReference>
<dbReference type="GO" id="GO:0003746">
    <property type="term" value="F:translation elongation factor activity"/>
    <property type="evidence" value="ECO:0007669"/>
    <property type="project" value="UniProtKB-UniRule"/>
</dbReference>
<dbReference type="GO" id="GO:0043043">
    <property type="term" value="P:peptide biosynthetic process"/>
    <property type="evidence" value="ECO:0007669"/>
    <property type="project" value="InterPro"/>
</dbReference>
<dbReference type="CDD" id="cd04470">
    <property type="entry name" value="S1_EF-P_repeat_1"/>
    <property type="match status" value="1"/>
</dbReference>
<dbReference type="CDD" id="cd05794">
    <property type="entry name" value="S1_EF-P_repeat_2"/>
    <property type="match status" value="1"/>
</dbReference>
<dbReference type="FunFam" id="2.40.50.140:FF:000004">
    <property type="entry name" value="Elongation factor P"/>
    <property type="match status" value="1"/>
</dbReference>
<dbReference type="FunFam" id="2.30.30.30:FF:000011">
    <property type="entry name" value="Elongation factor P-like protein"/>
    <property type="match status" value="1"/>
</dbReference>
<dbReference type="Gene3D" id="2.30.30.30">
    <property type="match status" value="1"/>
</dbReference>
<dbReference type="Gene3D" id="2.40.50.140">
    <property type="entry name" value="Nucleic acid-binding proteins"/>
    <property type="match status" value="2"/>
</dbReference>
<dbReference type="HAMAP" id="MF_00646">
    <property type="entry name" value="EFP"/>
    <property type="match status" value="1"/>
</dbReference>
<dbReference type="InterPro" id="IPR015365">
    <property type="entry name" value="Elong-fact-P_C"/>
</dbReference>
<dbReference type="InterPro" id="IPR012340">
    <property type="entry name" value="NA-bd_OB-fold"/>
</dbReference>
<dbReference type="InterPro" id="IPR014722">
    <property type="entry name" value="Rib_uL2_dom2"/>
</dbReference>
<dbReference type="InterPro" id="IPR020599">
    <property type="entry name" value="Transl_elong_fac_P/YeiP"/>
</dbReference>
<dbReference type="InterPro" id="IPR013185">
    <property type="entry name" value="Transl_elong_KOW-like"/>
</dbReference>
<dbReference type="InterPro" id="IPR011897">
    <property type="entry name" value="Transl_elong_p-like_YeiP"/>
</dbReference>
<dbReference type="InterPro" id="IPR001059">
    <property type="entry name" value="Transl_elong_P/YeiP_cen"/>
</dbReference>
<dbReference type="InterPro" id="IPR013852">
    <property type="entry name" value="Transl_elong_P/YeiP_CS"/>
</dbReference>
<dbReference type="InterPro" id="IPR008991">
    <property type="entry name" value="Translation_prot_SH3-like_sf"/>
</dbReference>
<dbReference type="NCBIfam" id="NF001810">
    <property type="entry name" value="PRK00529.1"/>
    <property type="match status" value="1"/>
</dbReference>
<dbReference type="NCBIfam" id="NF003392">
    <property type="entry name" value="PRK04542.1"/>
    <property type="match status" value="1"/>
</dbReference>
<dbReference type="NCBIfam" id="TIGR02178">
    <property type="entry name" value="yeiP"/>
    <property type="match status" value="1"/>
</dbReference>
<dbReference type="PANTHER" id="PTHR30053">
    <property type="entry name" value="ELONGATION FACTOR P"/>
    <property type="match status" value="1"/>
</dbReference>
<dbReference type="PANTHER" id="PTHR30053:SF14">
    <property type="entry name" value="TRANSLATION ELONGATION FACTOR KOW-LIKE DOMAIN-CONTAINING PROTEIN"/>
    <property type="match status" value="1"/>
</dbReference>
<dbReference type="Pfam" id="PF01132">
    <property type="entry name" value="EFP"/>
    <property type="match status" value="1"/>
</dbReference>
<dbReference type="Pfam" id="PF08207">
    <property type="entry name" value="EFP_N"/>
    <property type="match status" value="1"/>
</dbReference>
<dbReference type="Pfam" id="PF09285">
    <property type="entry name" value="Elong-fact-P_C"/>
    <property type="match status" value="1"/>
</dbReference>
<dbReference type="PIRSF" id="PIRSF005901">
    <property type="entry name" value="EF-P"/>
    <property type="match status" value="1"/>
</dbReference>
<dbReference type="SMART" id="SM01185">
    <property type="entry name" value="EFP"/>
    <property type="match status" value="1"/>
</dbReference>
<dbReference type="SMART" id="SM00841">
    <property type="entry name" value="Elong-fact-P_C"/>
    <property type="match status" value="1"/>
</dbReference>
<dbReference type="SUPFAM" id="SSF50249">
    <property type="entry name" value="Nucleic acid-binding proteins"/>
    <property type="match status" value="2"/>
</dbReference>
<dbReference type="SUPFAM" id="SSF50104">
    <property type="entry name" value="Translation proteins SH3-like domain"/>
    <property type="match status" value="1"/>
</dbReference>
<dbReference type="PROSITE" id="PS01275">
    <property type="entry name" value="EFP"/>
    <property type="match status" value="1"/>
</dbReference>
<organism>
    <name type="scientific">Vibrio cholerae serotype O1 (strain M66-2)</name>
    <dbReference type="NCBI Taxonomy" id="579112"/>
    <lineage>
        <taxon>Bacteria</taxon>
        <taxon>Pseudomonadati</taxon>
        <taxon>Pseudomonadota</taxon>
        <taxon>Gammaproteobacteria</taxon>
        <taxon>Vibrionales</taxon>
        <taxon>Vibrionaceae</taxon>
        <taxon>Vibrio</taxon>
    </lineage>
</organism>
<protein>
    <recommendedName>
        <fullName evidence="1">Elongation factor P-like protein</fullName>
    </recommendedName>
</protein>
<gene>
    <name type="ordered locus">VCM66_1164</name>
</gene>
<proteinExistence type="inferred from homology"/>
<feature type="chain" id="PRO_0000384928" description="Elongation factor P-like protein">
    <location>
        <begin position="1"/>
        <end position="188"/>
    </location>
</feature>
<evidence type="ECO:0000255" key="1">
    <source>
        <dbReference type="HAMAP-Rule" id="MF_00646"/>
    </source>
</evidence>
<evidence type="ECO:0000305" key="2"/>
<reference key="1">
    <citation type="journal article" date="2008" name="PLoS ONE">
        <title>A recalibrated molecular clock and independent origins for the cholera pandemic clones.</title>
        <authorList>
            <person name="Feng L."/>
            <person name="Reeves P.R."/>
            <person name="Lan R."/>
            <person name="Ren Y."/>
            <person name="Gao C."/>
            <person name="Zhou Z."/>
            <person name="Ren Y."/>
            <person name="Cheng J."/>
            <person name="Wang W."/>
            <person name="Wang J."/>
            <person name="Qian W."/>
            <person name="Li D."/>
            <person name="Wang L."/>
        </authorList>
    </citation>
    <scope>NUCLEOTIDE SEQUENCE [LARGE SCALE GENOMIC DNA]</scope>
    <source>
        <strain>M66-2</strain>
    </source>
</reference>
<name>EFPL_VIBCM</name>
<comment type="similarity">
    <text evidence="1">Belongs to the elongation factor P family.</text>
</comment>
<comment type="sequence caution" evidence="2">
    <conflict type="erroneous initiation">
        <sequence resource="EMBL-CDS" id="ACP05481"/>
    </conflict>
</comment>
<accession>C3LLQ5</accession>
<sequence length="188" mass="20898">MPKASELKKGFAIISNGKTLLIKDIEVTTPGGRGGSKIYKLRCTDLNTGARVDERYKSDDVLDTVEMNKRPISFSYIDGDEYVFMNNDDYTPYNFKKDEIEDELLFITEEIQGMSVVLVDGEAVAIELPSSVEMVIEETDPSIKGASASSRTKPARMPTGLVVQVPEYIATGDRIVINTAERKFMNRA</sequence>